<organism>
    <name type="scientific">Escherichia coli</name>
    <dbReference type="NCBI Taxonomy" id="562"/>
    <lineage>
        <taxon>Bacteria</taxon>
        <taxon>Pseudomonadati</taxon>
        <taxon>Pseudomonadota</taxon>
        <taxon>Gammaproteobacteria</taxon>
        <taxon>Enterobacterales</taxon>
        <taxon>Enterobacteriaceae</taxon>
        <taxon>Escherichia</taxon>
    </lineage>
</organism>
<protein>
    <recommendedName>
        <fullName evidence="1">Urease accessory protein UreD</fullName>
    </recommendedName>
</protein>
<proteinExistence type="evidence at transcript level"/>
<evidence type="ECO:0000255" key="1">
    <source>
        <dbReference type="HAMAP-Rule" id="MF_01384"/>
    </source>
</evidence>
<evidence type="ECO:0000269" key="2">
    <source>
    </source>
</evidence>
<dbReference type="EMBL" id="L03307">
    <property type="protein sequence ID" value="AAA24744.1"/>
    <property type="molecule type" value="Genomic_DNA"/>
</dbReference>
<dbReference type="PIR" id="A47090">
    <property type="entry name" value="A47090"/>
</dbReference>
<dbReference type="SMR" id="Q03285"/>
<dbReference type="GO" id="GO:0005737">
    <property type="term" value="C:cytoplasm"/>
    <property type="evidence" value="ECO:0007669"/>
    <property type="project" value="UniProtKB-SubCell"/>
</dbReference>
<dbReference type="GO" id="GO:0016151">
    <property type="term" value="F:nickel cation binding"/>
    <property type="evidence" value="ECO:0007669"/>
    <property type="project" value="UniProtKB-UniRule"/>
</dbReference>
<dbReference type="HAMAP" id="MF_01384">
    <property type="entry name" value="UreD"/>
    <property type="match status" value="1"/>
</dbReference>
<dbReference type="InterPro" id="IPR002669">
    <property type="entry name" value="UreD"/>
</dbReference>
<dbReference type="PANTHER" id="PTHR33643">
    <property type="entry name" value="UREASE ACCESSORY PROTEIN D"/>
    <property type="match status" value="1"/>
</dbReference>
<dbReference type="PANTHER" id="PTHR33643:SF1">
    <property type="entry name" value="UREASE ACCESSORY PROTEIN D"/>
    <property type="match status" value="1"/>
</dbReference>
<dbReference type="Pfam" id="PF01774">
    <property type="entry name" value="UreD"/>
    <property type="match status" value="1"/>
</dbReference>
<gene>
    <name evidence="1" type="primary">ureD</name>
</gene>
<keyword id="KW-0143">Chaperone</keyword>
<keyword id="KW-0963">Cytoplasm</keyword>
<keyword id="KW-0996">Nickel insertion</keyword>
<keyword id="KW-0614">Plasmid</keyword>
<sequence>MSDFSGSGWLAEIFLRYELKRGVTRLTDKQHIGPLMVQRPFYPEQGIAHTYLLHPPGGVVGGDKLLINIDVQPHAHALLTTPGATKFYRSAGGVARQVQTLTVAPNGFLEWLPQENIFFPEAQVRLETHVRIASSSKFISWEIQCLGRPVLNEQFDNGDIRGRLQFYIDDKLTLAESIFIEGSQKQSAVMREFPMVGSLYIYPASDELKAELHESLAVFFSTEVRPLEYGLTDVDGILVLRLLGSQTEPMMACFAHIWQATRQYWLGYCPEPPRIWAT</sequence>
<feature type="chain" id="PRO_0000067610" description="Urease accessory protein UreD">
    <location>
        <begin position="1"/>
        <end position="278"/>
    </location>
</feature>
<accession>Q03285</accession>
<geneLocation type="plasmid"/>
<comment type="function">
    <text evidence="1">Required for maturation of urease via the functional incorporation of the urease nickel metallocenter.</text>
</comment>
<comment type="subunit">
    <text evidence="1">UreD, UreF and UreG form a complex that acts as a GTP-hydrolysis-dependent molecular chaperone, activating the urease apoprotein by helping to assemble the nickel containing metallocenter of UreC. The UreE protein probably delivers the nickel.</text>
</comment>
<comment type="subcellular location">
    <subcellularLocation>
        <location evidence="1">Cytoplasm</location>
    </subcellularLocation>
</comment>
<comment type="induction">
    <text evidence="2">The probable operon is induced by urea.</text>
</comment>
<comment type="similarity">
    <text evidence="1">Belongs to the UreD family.</text>
</comment>
<reference key="1">
    <citation type="journal article" date="1993" name="J. Bacteriol.">
        <title>Characterization of a plasmid-encoded urease gene cluster found in members of the family Enterobacteriaceae.</title>
        <authorList>
            <person name="D'Orazio S.E."/>
            <person name="Collins C.M."/>
        </authorList>
    </citation>
    <scope>NUCLEOTIDE SEQUENCE [GENOMIC DNA]</scope>
    <scope>INDUCTION</scope>
    <source>
        <strain>1440 / UPEC</strain>
    </source>
</reference>
<name>URED_ECOLX</name>